<reference key="1">
    <citation type="journal article" date="2008" name="BMC Genomics">
        <title>Comparative genomic analysis of the gut bacterium Bifidobacterium longum reveals loci susceptible to deletion during pure culture growth.</title>
        <authorList>
            <person name="Lee J.H."/>
            <person name="Karamychev V.N."/>
            <person name="Kozyavkin S.A."/>
            <person name="Mills D."/>
            <person name="Pavlov A.R."/>
            <person name="Pavlova N.V."/>
            <person name="Polouchine N.N."/>
            <person name="Richardson P.M."/>
            <person name="Shakhova V.V."/>
            <person name="Slesarev A.I."/>
            <person name="Weimer B."/>
            <person name="O'Sullivan D.J."/>
        </authorList>
    </citation>
    <scope>NUCLEOTIDE SEQUENCE [LARGE SCALE GENOMIC DNA]</scope>
    <source>
        <strain>DJO10A</strain>
    </source>
</reference>
<comment type="function">
    <text evidence="1">Binds to the 23S rRNA.</text>
</comment>
<comment type="similarity">
    <text evidence="1">Belongs to the bacterial ribosomal protein bL9 family.</text>
</comment>
<sequence length="148" mass="15445">MAETKVILTKTVSNLGHSGDVVDVKSGYARNYLFPQGLAFAWTKGAEAQIVAMKRARLAKAVATREDAVAAKAAIEGTTVEIAAKVSESGKLFGGISNEAIAVALSDKAAVNPKAIEVETIKTTGDFPAKVALHPEITASFFVKVVAE</sequence>
<accession>B3DU42</accession>
<protein>
    <recommendedName>
        <fullName evidence="1">Large ribosomal subunit protein bL9</fullName>
    </recommendedName>
    <alternativeName>
        <fullName evidence="2">50S ribosomal protein L9</fullName>
    </alternativeName>
</protein>
<name>RL9_BIFLD</name>
<proteinExistence type="inferred from homology"/>
<gene>
    <name evidence="1" type="primary">rplI</name>
    <name type="ordered locus">BLD_1216</name>
</gene>
<evidence type="ECO:0000255" key="1">
    <source>
        <dbReference type="HAMAP-Rule" id="MF_00503"/>
    </source>
</evidence>
<evidence type="ECO:0000305" key="2"/>
<organism>
    <name type="scientific">Bifidobacterium longum (strain DJO10A)</name>
    <dbReference type="NCBI Taxonomy" id="205913"/>
    <lineage>
        <taxon>Bacteria</taxon>
        <taxon>Bacillati</taxon>
        <taxon>Actinomycetota</taxon>
        <taxon>Actinomycetes</taxon>
        <taxon>Bifidobacteriales</taxon>
        <taxon>Bifidobacteriaceae</taxon>
        <taxon>Bifidobacterium</taxon>
    </lineage>
</organism>
<dbReference type="EMBL" id="CP000605">
    <property type="protein sequence ID" value="ACD98661.1"/>
    <property type="molecule type" value="Genomic_DNA"/>
</dbReference>
<dbReference type="RefSeq" id="WP_007051544.1">
    <property type="nucleotide sequence ID" value="NZ_AABM02000005.1"/>
</dbReference>
<dbReference type="SMR" id="B3DU42"/>
<dbReference type="GeneID" id="69577462"/>
<dbReference type="KEGG" id="blj:BLD_1216"/>
<dbReference type="HOGENOM" id="CLU_078938_5_1_11"/>
<dbReference type="Proteomes" id="UP000002419">
    <property type="component" value="Chromosome"/>
</dbReference>
<dbReference type="GO" id="GO:1990904">
    <property type="term" value="C:ribonucleoprotein complex"/>
    <property type="evidence" value="ECO:0007669"/>
    <property type="project" value="UniProtKB-KW"/>
</dbReference>
<dbReference type="GO" id="GO:0005840">
    <property type="term" value="C:ribosome"/>
    <property type="evidence" value="ECO:0007669"/>
    <property type="project" value="UniProtKB-KW"/>
</dbReference>
<dbReference type="GO" id="GO:0019843">
    <property type="term" value="F:rRNA binding"/>
    <property type="evidence" value="ECO:0007669"/>
    <property type="project" value="UniProtKB-UniRule"/>
</dbReference>
<dbReference type="GO" id="GO:0003735">
    <property type="term" value="F:structural constituent of ribosome"/>
    <property type="evidence" value="ECO:0007669"/>
    <property type="project" value="InterPro"/>
</dbReference>
<dbReference type="GO" id="GO:0006412">
    <property type="term" value="P:translation"/>
    <property type="evidence" value="ECO:0007669"/>
    <property type="project" value="UniProtKB-UniRule"/>
</dbReference>
<dbReference type="FunFam" id="3.40.5.10:FF:000003">
    <property type="entry name" value="50S ribosomal protein L9"/>
    <property type="match status" value="1"/>
</dbReference>
<dbReference type="Gene3D" id="3.10.430.100">
    <property type="entry name" value="Ribosomal protein L9, C-terminal domain"/>
    <property type="match status" value="1"/>
</dbReference>
<dbReference type="Gene3D" id="3.40.5.10">
    <property type="entry name" value="Ribosomal protein L9, N-terminal domain"/>
    <property type="match status" value="1"/>
</dbReference>
<dbReference type="HAMAP" id="MF_00503">
    <property type="entry name" value="Ribosomal_bL9"/>
    <property type="match status" value="1"/>
</dbReference>
<dbReference type="InterPro" id="IPR000244">
    <property type="entry name" value="Ribosomal_bL9"/>
</dbReference>
<dbReference type="InterPro" id="IPR009027">
    <property type="entry name" value="Ribosomal_bL9/RNase_H1_N"/>
</dbReference>
<dbReference type="InterPro" id="IPR020594">
    <property type="entry name" value="Ribosomal_bL9_bac/chp"/>
</dbReference>
<dbReference type="InterPro" id="IPR020069">
    <property type="entry name" value="Ribosomal_bL9_C"/>
</dbReference>
<dbReference type="InterPro" id="IPR036791">
    <property type="entry name" value="Ribosomal_bL9_C_sf"/>
</dbReference>
<dbReference type="InterPro" id="IPR020070">
    <property type="entry name" value="Ribosomal_bL9_N"/>
</dbReference>
<dbReference type="InterPro" id="IPR036935">
    <property type="entry name" value="Ribosomal_bL9_N_sf"/>
</dbReference>
<dbReference type="NCBIfam" id="TIGR00158">
    <property type="entry name" value="L9"/>
    <property type="match status" value="1"/>
</dbReference>
<dbReference type="PANTHER" id="PTHR21368">
    <property type="entry name" value="50S RIBOSOMAL PROTEIN L9"/>
    <property type="match status" value="1"/>
</dbReference>
<dbReference type="Pfam" id="PF03948">
    <property type="entry name" value="Ribosomal_L9_C"/>
    <property type="match status" value="1"/>
</dbReference>
<dbReference type="Pfam" id="PF01281">
    <property type="entry name" value="Ribosomal_L9_N"/>
    <property type="match status" value="1"/>
</dbReference>
<dbReference type="SUPFAM" id="SSF55658">
    <property type="entry name" value="L9 N-domain-like"/>
    <property type="match status" value="1"/>
</dbReference>
<dbReference type="SUPFAM" id="SSF55653">
    <property type="entry name" value="Ribosomal protein L9 C-domain"/>
    <property type="match status" value="1"/>
</dbReference>
<dbReference type="PROSITE" id="PS00651">
    <property type="entry name" value="RIBOSOMAL_L9"/>
    <property type="match status" value="1"/>
</dbReference>
<feature type="chain" id="PRO_1000126870" description="Large ribosomal subunit protein bL9">
    <location>
        <begin position="1"/>
        <end position="148"/>
    </location>
</feature>
<keyword id="KW-0687">Ribonucleoprotein</keyword>
<keyword id="KW-0689">Ribosomal protein</keyword>
<keyword id="KW-0694">RNA-binding</keyword>
<keyword id="KW-0699">rRNA-binding</keyword>